<name>SPSA2_CRAPL</name>
<protein>
    <recommendedName>
        <fullName>Probable sucrose-phosphate synthase 2</fullName>
        <ecNumber>2.4.1.14</ecNumber>
    </recommendedName>
    <alternativeName>
        <fullName>UDP-glucose-fructose-phosphate glucosyltransferase 2</fullName>
    </alternativeName>
</protein>
<sequence>MAGNEWINGYLEAILDTGASAIDENSGGGKTAAAQKGRHHDHHFNPTKYFVEEVVSGVDESDLHRTWIKVVATRNTRERSSRLENMCWRIWHLTRKKKQLEWEDLQRLAARKWEREQGRKDVTEDMSEDLSEGEKGDVMGETPVALDSPRGNKKYHRNFSNLEVWSDSNKEKKLYIVLISLHGLVRGENMELGRDSDTGGQIKYVVEVARALAKMPGVYRVDLFTRQISSPEVDWSYAEPTEMLSSSSTTAGEAHEPEEEEEEEDLGEGSGAYIIRIPFGPRDKYLRKELLWPHIQEFVDGALSHIVNMSKALGDQIGGGQPVWPYVIHGHYADAGDSAALLSGALNVPMVLTGHSLGRNKLEQLLKQGRQTKEDINSMYRIMRRIEAEELSLDAAELVITSTKQEIEEQWGLYDGFDVKLERVLRARARRGVNCHGRFMPRMAVIPPGMDFSNVVVPEDGSEGDGDLATLTEATSPRSVPAIWADVMRFLTNPHKPMILALSRPDPKKNITTLVKAFGECRPLRELANLTLIMGNRDDIDEMSGGNASVLTTVLKLIDRYDLYGQVAFPKHHKQSDVPEIYRLASKTKGVFINPAFIEPFGLTLIEAAAHGLPMVATKNGGPVDIHRALNNGLLVDPHDQDAIANALLKLVSEKNLWNECRKNGLKNIHLFSWPEHCRTYLTRVAACRMRHPQWKTDTPLDETAIDDSLNDSLKDVLDMSLRLSVDGEKMSVNESSSVELPGGEAAELPDQVRRVLNKIKRQDSGPAQREAEGKAGDVPGKYPMLRRRRKLFVIALDCYDLKGNPDKKMILSIQEIVRAVRLDPQMSRFSGFALSTAMPVAELADFLKAGDVKVNDFDALICSSGSEVYYPGTYGEESGKLYLDPDYTSHIEYRWGGDGLKKTISKLMNTAEDGKSSVASSPIELVAKSSNSHCLSYAIKDPSKAKKVDDMRQKLRMRGLRCHLMYCRNSTSMQVVPLLASRSQALRYLFVRWRLSVANMYVILGETGDTDYEELISGTHKTLIMRGVVEKGSEELLRTAGSYLRDDVIPQDTPLIAYADKGAKAEHIVETFRQLSKAGM</sequence>
<proteinExistence type="evidence at transcript level"/>
<feature type="chain" id="PRO_0000204670" description="Probable sucrose-phosphate synthase 2">
    <location>
        <begin position="1"/>
        <end position="1081"/>
    </location>
</feature>
<feature type="region of interest" description="Disordered" evidence="2">
    <location>
        <begin position="116"/>
        <end position="152"/>
    </location>
</feature>
<feature type="region of interest" description="Disordered" evidence="2">
    <location>
        <begin position="239"/>
        <end position="267"/>
    </location>
</feature>
<feature type="region of interest" description="Disordered" evidence="2">
    <location>
        <begin position="760"/>
        <end position="780"/>
    </location>
</feature>
<feature type="compositionally biased region" description="Acidic residues" evidence="2">
    <location>
        <begin position="256"/>
        <end position="267"/>
    </location>
</feature>
<organism>
    <name type="scientific">Craterostigma plantagineum</name>
    <name type="common">Blue gem</name>
    <name type="synonym">Torenia plantagineum</name>
    <dbReference type="NCBI Taxonomy" id="4153"/>
    <lineage>
        <taxon>Eukaryota</taxon>
        <taxon>Viridiplantae</taxon>
        <taxon>Streptophyta</taxon>
        <taxon>Embryophyta</taxon>
        <taxon>Tracheophyta</taxon>
        <taxon>Spermatophyta</taxon>
        <taxon>Magnoliopsida</taxon>
        <taxon>eudicotyledons</taxon>
        <taxon>Gunneridae</taxon>
        <taxon>Pentapetalae</taxon>
        <taxon>asterids</taxon>
        <taxon>lamiids</taxon>
        <taxon>Lamiales</taxon>
        <taxon>Linderniaceae</taxon>
        <taxon>Craterostigma</taxon>
    </lineage>
</organism>
<reference key="1">
    <citation type="journal article" date="1997" name="Plant Physiol.">
        <title>Analysis of cDNA clones encoding sucrose-phosphate synthase in relation to sugar interconversions associated with dehydration in the resurrection plant Craterostigma plantagineum Hochst.</title>
        <authorList>
            <person name="Ingram J."/>
            <person name="Chandler J.W."/>
            <person name="Gallagher L."/>
            <person name="Salamini F."/>
            <person name="Bartels D."/>
        </authorList>
    </citation>
    <scope>NUCLEOTIDE SEQUENCE [MRNA]</scope>
</reference>
<gene>
    <name type="primary">SPS2</name>
</gene>
<dbReference type="EC" id="2.4.1.14"/>
<dbReference type="EMBL" id="Y11795">
    <property type="protein sequence ID" value="CAA72491.1"/>
    <property type="molecule type" value="mRNA"/>
</dbReference>
<dbReference type="PIR" id="T09837">
    <property type="entry name" value="T09837"/>
</dbReference>
<dbReference type="SMR" id="O04933"/>
<dbReference type="CAZy" id="GT4">
    <property type="family name" value="Glycosyltransferase Family 4"/>
</dbReference>
<dbReference type="UniPathway" id="UPA00371">
    <property type="reaction ID" value="UER00545"/>
</dbReference>
<dbReference type="GO" id="GO:0046524">
    <property type="term" value="F:sucrose-phosphate synthase activity"/>
    <property type="evidence" value="ECO:0007669"/>
    <property type="project" value="UniProtKB-EC"/>
</dbReference>
<dbReference type="GO" id="GO:0005986">
    <property type="term" value="P:sucrose biosynthetic process"/>
    <property type="evidence" value="ECO:0007669"/>
    <property type="project" value="UniProtKB-UniPathway"/>
</dbReference>
<dbReference type="CDD" id="cd03800">
    <property type="entry name" value="GT4_sucrose_synthase"/>
    <property type="match status" value="1"/>
</dbReference>
<dbReference type="CDD" id="cd16419">
    <property type="entry name" value="HAD_SPS"/>
    <property type="match status" value="1"/>
</dbReference>
<dbReference type="FunFam" id="3.40.50.2000:FF:000077">
    <property type="entry name" value="Sucrose-phosphate synthase 2"/>
    <property type="match status" value="1"/>
</dbReference>
<dbReference type="Gene3D" id="3.40.50.2000">
    <property type="entry name" value="Glycogen Phosphorylase B"/>
    <property type="match status" value="2"/>
</dbReference>
<dbReference type="InterPro" id="IPR001296">
    <property type="entry name" value="Glyco_trans_1"/>
</dbReference>
<dbReference type="InterPro" id="IPR006380">
    <property type="entry name" value="SPP-like_dom"/>
</dbReference>
<dbReference type="InterPro" id="IPR044161">
    <property type="entry name" value="SPS"/>
</dbReference>
<dbReference type="InterPro" id="IPR035659">
    <property type="entry name" value="SPS_C"/>
</dbReference>
<dbReference type="InterPro" id="IPR012819">
    <property type="entry name" value="SPS_pln"/>
</dbReference>
<dbReference type="InterPro" id="IPR000368">
    <property type="entry name" value="Sucrose_synth_GT-B1"/>
</dbReference>
<dbReference type="NCBIfam" id="TIGR02468">
    <property type="entry name" value="sucrsPsyn_pln"/>
    <property type="match status" value="1"/>
</dbReference>
<dbReference type="PANTHER" id="PTHR46039">
    <property type="entry name" value="SUCROSE-PHOSPHATE SYNTHASE 3-RELATED"/>
    <property type="match status" value="1"/>
</dbReference>
<dbReference type="PANTHER" id="PTHR46039:SF5">
    <property type="entry name" value="SUCROSE-PHOSPHATE SYNTHASE 3-RELATED"/>
    <property type="match status" value="1"/>
</dbReference>
<dbReference type="Pfam" id="PF00534">
    <property type="entry name" value="Glycos_transf_1"/>
    <property type="match status" value="1"/>
</dbReference>
<dbReference type="Pfam" id="PF00862">
    <property type="entry name" value="GT-B_Sucrose_synth"/>
    <property type="match status" value="1"/>
</dbReference>
<dbReference type="Pfam" id="PF05116">
    <property type="entry name" value="S6PP"/>
    <property type="match status" value="1"/>
</dbReference>
<dbReference type="SUPFAM" id="SSF53756">
    <property type="entry name" value="UDP-Glycosyltransferase/glycogen phosphorylase"/>
    <property type="match status" value="1"/>
</dbReference>
<comment type="function">
    <text evidence="1">Plays a role in photosynthetic sucrose synthesis by catalyzing the rate-limiting step of sucrose biosynthesis from UDP-glucose and fructose- 6-phosphate. Involved in the regulation of carbon partitioning in the leaves of plants. May regulate the synthesis of sucrose and therefore play a major role as a limiting factor in the export of photoassimilates out of the leaf. Plays a role for sucrose availability that is essential for plant growth and fiber elongation (By similarity).</text>
</comment>
<comment type="catalytic activity">
    <reaction>
        <text>beta-D-fructose 6-phosphate + UDP-alpha-D-glucose = sucrose 6(F)-phosphate + UDP + H(+)</text>
        <dbReference type="Rhea" id="RHEA:22172"/>
        <dbReference type="ChEBI" id="CHEBI:15378"/>
        <dbReference type="ChEBI" id="CHEBI:57634"/>
        <dbReference type="ChEBI" id="CHEBI:57723"/>
        <dbReference type="ChEBI" id="CHEBI:58223"/>
        <dbReference type="ChEBI" id="CHEBI:58885"/>
        <dbReference type="EC" id="2.4.1.14"/>
    </reaction>
</comment>
<comment type="activity regulation">
    <text evidence="1">Activity is regulated by phosphorylation and moderated by concentration of metabolites and light.</text>
</comment>
<comment type="pathway">
    <text>Glycan biosynthesis; sucrose biosynthesis; sucrose from D-fructose 6-phosphate and UDP-alpha-D-glucose: step 1/2.</text>
</comment>
<comment type="subunit">
    <text evidence="1">Homodimer or homotetramer.</text>
</comment>
<comment type="similarity">
    <text evidence="3">Belongs to the glycosyltransferase 1 family.</text>
</comment>
<keyword id="KW-0328">Glycosyltransferase</keyword>
<keyword id="KW-0808">Transferase</keyword>
<accession>O04933</accession>
<evidence type="ECO:0000250" key="1"/>
<evidence type="ECO:0000256" key="2">
    <source>
        <dbReference type="SAM" id="MobiDB-lite"/>
    </source>
</evidence>
<evidence type="ECO:0000305" key="3"/>